<sequence length="140" mass="15581">MAGLPDRDKLIRNFSRCLNWEEKYLYIIELGGQLAPLTEQQRHPENLISGCQSQVWIAMTLSAEGHVIFAGDSDAAIVKGLVAVVFILYHDLTPQQIISLDVRPFFADLALSQHLTPSRSQGLEAMIRAIRTKVANLSAH</sequence>
<evidence type="ECO:0000255" key="1">
    <source>
        <dbReference type="HAMAP-Rule" id="MF_01832"/>
    </source>
</evidence>
<keyword id="KW-0963">Cytoplasm</keyword>
<feature type="chain" id="PRO_0000202135" description="Cysteine desulfuration protein SufE">
    <location>
        <begin position="1"/>
        <end position="140"/>
    </location>
</feature>
<feature type="active site" description="Cysteine persulfide intermediate" evidence="1">
    <location>
        <position position="51"/>
    </location>
</feature>
<reference key="1">
    <citation type="journal article" date="2004" name="Proc. Natl. Acad. Sci. U.S.A.">
        <title>Insights into the evolution of Yersinia pestis through whole-genome comparison with Yersinia pseudotuberculosis.</title>
        <authorList>
            <person name="Chain P.S.G."/>
            <person name="Carniel E."/>
            <person name="Larimer F.W."/>
            <person name="Lamerdin J."/>
            <person name="Stoutland P.O."/>
            <person name="Regala W.M."/>
            <person name="Georgescu A.M."/>
            <person name="Vergez L.M."/>
            <person name="Land M.L."/>
            <person name="Motin V.L."/>
            <person name="Brubaker R.R."/>
            <person name="Fowler J."/>
            <person name="Hinnebusch J."/>
            <person name="Marceau M."/>
            <person name="Medigue C."/>
            <person name="Simonet M."/>
            <person name="Chenal-Francisque V."/>
            <person name="Souza B."/>
            <person name="Dacheux D."/>
            <person name="Elliott J.M."/>
            <person name="Derbise A."/>
            <person name="Hauser L.J."/>
            <person name="Garcia E."/>
        </authorList>
    </citation>
    <scope>NUCLEOTIDE SEQUENCE [LARGE SCALE GENOMIC DNA]</scope>
    <source>
        <strain>IP32953</strain>
    </source>
</reference>
<gene>
    <name evidence="1" type="primary">sufE</name>
    <name type="ordered locus">YPTB2309</name>
</gene>
<dbReference type="EMBL" id="BX936398">
    <property type="protein sequence ID" value="CAH21547.1"/>
    <property type="molecule type" value="Genomic_DNA"/>
</dbReference>
<dbReference type="RefSeq" id="WP_002211804.1">
    <property type="nucleotide sequence ID" value="NZ_CP009712.1"/>
</dbReference>
<dbReference type="SMR" id="Q66A23"/>
<dbReference type="GeneID" id="57976275"/>
<dbReference type="KEGG" id="ypo:BZ17_145"/>
<dbReference type="KEGG" id="yps:YPTB2309"/>
<dbReference type="PATRIC" id="fig|273123.14.peg.155"/>
<dbReference type="UniPathway" id="UPA00266"/>
<dbReference type="Proteomes" id="UP000001011">
    <property type="component" value="Chromosome"/>
</dbReference>
<dbReference type="GO" id="GO:0005737">
    <property type="term" value="C:cytoplasm"/>
    <property type="evidence" value="ECO:0007669"/>
    <property type="project" value="UniProtKB-SubCell"/>
</dbReference>
<dbReference type="GO" id="GO:0016226">
    <property type="term" value="P:iron-sulfur cluster assembly"/>
    <property type="evidence" value="ECO:0007669"/>
    <property type="project" value="InterPro"/>
</dbReference>
<dbReference type="GO" id="GO:0006790">
    <property type="term" value="P:sulfur compound metabolic process"/>
    <property type="evidence" value="ECO:0007669"/>
    <property type="project" value="InterPro"/>
</dbReference>
<dbReference type="Gene3D" id="3.90.1010.10">
    <property type="match status" value="1"/>
</dbReference>
<dbReference type="HAMAP" id="MF_01832">
    <property type="entry name" value="SufE"/>
    <property type="match status" value="1"/>
</dbReference>
<dbReference type="InterPro" id="IPR023939">
    <property type="entry name" value="Cysteine_desulfuration_SufE"/>
</dbReference>
<dbReference type="InterPro" id="IPR003808">
    <property type="entry name" value="Fe-S_metab-assoc_dom"/>
</dbReference>
<dbReference type="NCBIfam" id="NF006792">
    <property type="entry name" value="PRK09296.1"/>
    <property type="match status" value="1"/>
</dbReference>
<dbReference type="PANTHER" id="PTHR43597:SF3">
    <property type="entry name" value="CYSTEINE DESULFURATION PROTEIN SUFE"/>
    <property type="match status" value="1"/>
</dbReference>
<dbReference type="PANTHER" id="PTHR43597">
    <property type="entry name" value="SULFUR ACCEPTOR PROTEIN CSDE"/>
    <property type="match status" value="1"/>
</dbReference>
<dbReference type="Pfam" id="PF02657">
    <property type="entry name" value="SufE"/>
    <property type="match status" value="1"/>
</dbReference>
<dbReference type="SUPFAM" id="SSF82649">
    <property type="entry name" value="SufE/NifU"/>
    <property type="match status" value="1"/>
</dbReference>
<comment type="function">
    <text evidence="1">Participates in cysteine desulfuration mediated by SufS. Cysteine desulfuration mobilizes sulfur from L-cysteine to yield L-alanine and constitutes an essential step in sulfur metabolism for biosynthesis of a variety of sulfur-containing biomolecules. Functions as a sulfur acceptor for SufS, by mediating the direct transfer of the sulfur atom from the S-sulfanylcysteine of SufS, an intermediate product of cysteine desulfuration process.</text>
</comment>
<comment type="pathway">
    <text evidence="1">Cofactor biosynthesis; iron-sulfur cluster biosynthesis.</text>
</comment>
<comment type="subunit">
    <text evidence="1">Homodimer. Interacts with SufS.</text>
</comment>
<comment type="subcellular location">
    <subcellularLocation>
        <location evidence="1">Cytoplasm</location>
    </subcellularLocation>
</comment>
<comment type="similarity">
    <text evidence="1">Belongs to the SufE family.</text>
</comment>
<accession>Q66A23</accession>
<proteinExistence type="inferred from homology"/>
<name>SUFE_YERPS</name>
<protein>
    <recommendedName>
        <fullName evidence="1">Cysteine desulfuration protein SufE</fullName>
    </recommendedName>
</protein>
<organism>
    <name type="scientific">Yersinia pseudotuberculosis serotype I (strain IP32953)</name>
    <dbReference type="NCBI Taxonomy" id="273123"/>
    <lineage>
        <taxon>Bacteria</taxon>
        <taxon>Pseudomonadati</taxon>
        <taxon>Pseudomonadota</taxon>
        <taxon>Gammaproteobacteria</taxon>
        <taxon>Enterobacterales</taxon>
        <taxon>Yersiniaceae</taxon>
        <taxon>Yersinia</taxon>
    </lineage>
</organism>